<organism>
    <name type="scientific">Aeromonas salmonicida (strain A449)</name>
    <dbReference type="NCBI Taxonomy" id="382245"/>
    <lineage>
        <taxon>Bacteria</taxon>
        <taxon>Pseudomonadati</taxon>
        <taxon>Pseudomonadota</taxon>
        <taxon>Gammaproteobacteria</taxon>
        <taxon>Aeromonadales</taxon>
        <taxon>Aeromonadaceae</taxon>
        <taxon>Aeromonas</taxon>
    </lineage>
</organism>
<gene>
    <name evidence="1" type="primary">rnfD</name>
    <name type="ordered locus">ASA_2488</name>
</gene>
<reference key="1">
    <citation type="journal article" date="2008" name="BMC Genomics">
        <title>The genome of Aeromonas salmonicida subsp. salmonicida A449: insights into the evolution of a fish pathogen.</title>
        <authorList>
            <person name="Reith M.E."/>
            <person name="Singh R.K."/>
            <person name="Curtis B."/>
            <person name="Boyd J.M."/>
            <person name="Bouevitch A."/>
            <person name="Kimball J."/>
            <person name="Munholland J."/>
            <person name="Murphy C."/>
            <person name="Sarty D."/>
            <person name="Williams J."/>
            <person name="Nash J.H."/>
            <person name="Johnson S.C."/>
            <person name="Brown L.L."/>
        </authorList>
    </citation>
    <scope>NUCLEOTIDE SEQUENCE [LARGE SCALE GENOMIC DNA]</scope>
    <source>
        <strain>A449</strain>
    </source>
</reference>
<accession>A4SNP8</accession>
<proteinExistence type="inferred from homology"/>
<feature type="chain" id="PRO_1000013622" description="Ion-translocating oxidoreductase complex subunit D">
    <location>
        <begin position="1"/>
        <end position="350"/>
    </location>
</feature>
<feature type="transmembrane region" description="Helical" evidence="1">
    <location>
        <begin position="15"/>
        <end position="35"/>
    </location>
</feature>
<feature type="transmembrane region" description="Helical" evidence="1">
    <location>
        <begin position="36"/>
        <end position="56"/>
    </location>
</feature>
<feature type="transmembrane region" description="Helical" evidence="1">
    <location>
        <begin position="67"/>
        <end position="87"/>
    </location>
</feature>
<feature type="transmembrane region" description="Helical" evidence="1">
    <location>
        <begin position="88"/>
        <end position="108"/>
    </location>
</feature>
<feature type="transmembrane region" description="Helical" evidence="1">
    <location>
        <begin position="122"/>
        <end position="142"/>
    </location>
</feature>
<feature type="transmembrane region" description="Helical" evidence="1">
    <location>
        <begin position="213"/>
        <end position="233"/>
    </location>
</feature>
<feature type="transmembrane region" description="Helical" evidence="1">
    <location>
        <begin position="242"/>
        <end position="262"/>
    </location>
</feature>
<feature type="transmembrane region" description="Helical" evidence="1">
    <location>
        <begin position="264"/>
        <end position="284"/>
    </location>
</feature>
<feature type="transmembrane region" description="Helical" evidence="1">
    <location>
        <begin position="299"/>
        <end position="316"/>
    </location>
</feature>
<feature type="modified residue" description="FMN phosphoryl threonine" evidence="1">
    <location>
        <position position="186"/>
    </location>
</feature>
<dbReference type="EC" id="7.-.-.-" evidence="1"/>
<dbReference type="EMBL" id="CP000644">
    <property type="protein sequence ID" value="ABO90520.1"/>
    <property type="molecule type" value="Genomic_DNA"/>
</dbReference>
<dbReference type="SMR" id="A4SNP8"/>
<dbReference type="STRING" id="29491.GCA_000820065_00629"/>
<dbReference type="KEGG" id="asa:ASA_2488"/>
<dbReference type="eggNOG" id="COG4658">
    <property type="taxonomic scope" value="Bacteria"/>
</dbReference>
<dbReference type="HOGENOM" id="CLU_042020_0_0_6"/>
<dbReference type="Proteomes" id="UP000000225">
    <property type="component" value="Chromosome"/>
</dbReference>
<dbReference type="GO" id="GO:0005886">
    <property type="term" value="C:plasma membrane"/>
    <property type="evidence" value="ECO:0007669"/>
    <property type="project" value="UniProtKB-SubCell"/>
</dbReference>
<dbReference type="GO" id="GO:0022900">
    <property type="term" value="P:electron transport chain"/>
    <property type="evidence" value="ECO:0007669"/>
    <property type="project" value="UniProtKB-UniRule"/>
</dbReference>
<dbReference type="GO" id="GO:0055085">
    <property type="term" value="P:transmembrane transport"/>
    <property type="evidence" value="ECO:0007669"/>
    <property type="project" value="InterPro"/>
</dbReference>
<dbReference type="HAMAP" id="MF_00462">
    <property type="entry name" value="RsxD_RnfD"/>
    <property type="match status" value="1"/>
</dbReference>
<dbReference type="InterPro" id="IPR004338">
    <property type="entry name" value="NqrB/RnfD"/>
</dbReference>
<dbReference type="InterPro" id="IPR011303">
    <property type="entry name" value="RnfD_bac"/>
</dbReference>
<dbReference type="NCBIfam" id="NF002011">
    <property type="entry name" value="PRK00816.1"/>
    <property type="match status" value="1"/>
</dbReference>
<dbReference type="NCBIfam" id="TIGR01946">
    <property type="entry name" value="rnfD"/>
    <property type="match status" value="1"/>
</dbReference>
<dbReference type="PANTHER" id="PTHR30578">
    <property type="entry name" value="ELECTRON TRANSPORT COMPLEX PROTEIN RNFD"/>
    <property type="match status" value="1"/>
</dbReference>
<dbReference type="PANTHER" id="PTHR30578:SF0">
    <property type="entry name" value="ION-TRANSLOCATING OXIDOREDUCTASE COMPLEX SUBUNIT D"/>
    <property type="match status" value="1"/>
</dbReference>
<dbReference type="Pfam" id="PF03116">
    <property type="entry name" value="NQR2_RnfD_RnfE"/>
    <property type="match status" value="1"/>
</dbReference>
<sequence length="350" mass="37693">MFNIASAPFAHNRKQTQTLMLLVILACLPGLLAQTWFFGWGSFIQILLALVTALGAEALVLRLRRRPIKPALMDGSAALTAVLIGLSLPPLLPWWMLVLGTAFAIIIAKHLYGGLGQNLFNPAMVAYVLLLVSFPVQMTSWLPPDTIRAYDIGFGDAASVIFTGFSLDGYSMAQLKQGVDGLTMATPLDTLKTGLNQGLTTGEVMSHAVFEGWGGIGWSWVNLGYLLGGLFLLQQKVINWRIPGAILGSLLLAATLGYLMTPDATATPMFHLFSGATMLGAFFIATDPVSASTTPRGRLVYGVLIGVLVYLIRRFGGYPDAFAFAVLLANLCVPLIDSLTRPKVYGARRK</sequence>
<evidence type="ECO:0000255" key="1">
    <source>
        <dbReference type="HAMAP-Rule" id="MF_00462"/>
    </source>
</evidence>
<name>RNFD_AERS4</name>
<keyword id="KW-0997">Cell inner membrane</keyword>
<keyword id="KW-1003">Cell membrane</keyword>
<keyword id="KW-0249">Electron transport</keyword>
<keyword id="KW-0285">Flavoprotein</keyword>
<keyword id="KW-0288">FMN</keyword>
<keyword id="KW-0472">Membrane</keyword>
<keyword id="KW-0597">Phosphoprotein</keyword>
<keyword id="KW-1278">Translocase</keyword>
<keyword id="KW-0812">Transmembrane</keyword>
<keyword id="KW-1133">Transmembrane helix</keyword>
<keyword id="KW-0813">Transport</keyword>
<protein>
    <recommendedName>
        <fullName evidence="1">Ion-translocating oxidoreductase complex subunit D</fullName>
        <ecNumber evidence="1">7.-.-.-</ecNumber>
    </recommendedName>
    <alternativeName>
        <fullName evidence="1">Rnf electron transport complex subunit D</fullName>
    </alternativeName>
</protein>
<comment type="function">
    <text evidence="1">Part of a membrane-bound complex that couples electron transfer with translocation of ions across the membrane.</text>
</comment>
<comment type="cofactor">
    <cofactor evidence="1">
        <name>FMN</name>
        <dbReference type="ChEBI" id="CHEBI:58210"/>
    </cofactor>
</comment>
<comment type="subunit">
    <text evidence="1">The complex is composed of six subunits: RnfA, RnfB, RnfC, RnfD, RnfE and RnfG.</text>
</comment>
<comment type="subcellular location">
    <subcellularLocation>
        <location evidence="1">Cell inner membrane</location>
        <topology evidence="1">Multi-pass membrane protein</topology>
    </subcellularLocation>
</comment>
<comment type="similarity">
    <text evidence="1">Belongs to the NqrB/RnfD family.</text>
</comment>